<accession>Q03495</accession>
<sequence>MEAHQFIKAPGITTAIEQAALAAANSALANAVVVRPFLSHQQVEILINLMQPRQLVFRPEVFWNHPIQRVIHNELEQYCRARSGRCLEIGAHPRSINDNPNVLHRCFLHPVGRDVQRWYTAPTRGPAANCRRSALRGLPPADRTYCFDGFAGCRFAAETGVALYSLHDLQPADVAEAMARHGMTRLYAAFHLPPEVLLPPGTYRTSSYLLIHDGKRAVVTYEGDTSAGYNHDVATLRTWIRTTKVVGEHPLVIERVRGIGCHFVLLITAAPEPSPMPYVPYPRSTEVYVRSIFGPGGSPSLFPTACAVKSTFHAVPTHIWDRLMLFGATLDDQAFCCSRLMTYLRGISYKVTVGALVANEGWNATEDALTAVITAAYLTICHQRYLRTQAISKGMRRLELEHAQKFISRLYSWLFEKSGRDYIPGRQLQFYAQCRRWLSAGFHLDPRTLVFDESVPCSCRTTIRRIAGKFCCFMKWLGQECSCFLQPAEGLAGDQGHDNEAYEGSDVDTAEPATLDITGSYIVDGRSLQTVYQALDLPADLVARAARLSATVTVTETSGRLDCQTMIGNKTFLTTFVDGARLEVNGPEQLNLSFDSQQCSMAAGPFCLTYAAVDGGLEVHFSTAGLESRVVFPPGNAPTAPPSEVTAFCSALYRHNRQSQRQSVIGSLWLHPEGLLGLFPPFSPGHEWRSANPFCGESTLYTRTWSTITDTPLTVGLISGHLDAAPHSGGPPATATGPAVGSSDSPDPDPLPDVTDGSRPSGARPAGPNPNGVPQRRLLHTYPDGAKIYVGSIFESECTWLVNASNAGHRPGGGLCHAFFQRYPDSFDATKFVMRDGLAAYTLTPRPIIHAVAPDYRLEHNPKRLEAAYRETCARRGTAAYPLLGAGIYQVPVSLSFDAWERNHRPFDELYLTELAARWFESNRPGQPTLNITEDTARAANLALELDSGSEVGRACAGCKVEPGVVRYQFTAGVPGSGKSKSVQQADVDVVVVPTRELRNAWRRRGFAAFTPHTAARVTSGRRVVIDEAPSLPPHLLLLHMQRAASVHLLGDPNQIPAIDFEHTGLIPAIRPELVPTSWWHVTHRCPADVCELVRGAYPKIQTTSKVLRSLFWGEPAVGQKLVFTQAAKAAHPGSITVHEAQGATFTTTTIIATADARGLIQSSRAHAIVALTRHTEKCVILDSPGLLREVGISDAIVNNFFLSGGEVGHQRPSVIPRGNPDRNVDVLAAFPPSCQISAFHQLAEELGHRPAPVAAVLPPCPELEQGLLYLPQELASCDSVVTFELTDIVHCRMAAPSQRKAVLSTLVGRYGRRTRLYDAGHTDVRASLARFIPTLGRVTATTCELFELVEAMVEKGQDGSAVLELDLCSRDVSRITFFQKDCNKFTTGETIAHGKVGQGIFRWSKTFCALFGPWFRAIEKAILSLLPQAVFYGDAYDDSVFSAAVAGASHAMVFENDFSEFDSTQNNFSLGLECAIMEECGMPQWLVRLYHAVRSAWILQAPKESLRGFWKKHSGEPGSLLWNTVWNMAIIAHCYEFRDLQVAAFKGDDSVVLCSEYRQSPGAGSLIAGCGLKLKADFRPIGLYAGVVVAPGLGALPDVVRFAGRLSEKNWGPDPERAEQLRLAVQDFLRRLTNVAQICVEVVSRVYGVSPGLVHNLIGMLQTIGDGKAHFTESVKPILDLTHSIMHRSE</sequence>
<protein>
    <recommendedName>
        <fullName>Non-structural polyprotein pORF1</fullName>
    </recommendedName>
    <domain>
        <recommendedName>
            <fullName>Methyltransferase</fullName>
            <ecNumber evidence="4">2.1.1.-</ecNumber>
            <ecNumber evidence="5">2.7.7.-</ecNumber>
        </recommendedName>
    </domain>
    <domain>
        <recommendedName>
            <fullName>Putative protease</fullName>
            <ecNumber evidence="5">3.4.-.-</ecNumber>
        </recommendedName>
        <alternativeName>
            <fullName evidence="3">Putative papain-like cysteine protease</fullName>
            <shortName evidence="3">PCP</shortName>
        </alternativeName>
    </domain>
    <domain>
        <recommendedName>
            <fullName>NTPase/helicase</fullName>
            <ecNumber evidence="5">3.6.4.-</ecNumber>
        </recommendedName>
    </domain>
    <domain>
        <recommendedName>
            <fullName>RNA-directed RNA polymerase</fullName>
            <shortName>RdRp</shortName>
            <ecNumber>2.7.7.48</ecNumber>
        </recommendedName>
    </domain>
</protein>
<comment type="function">
    <text evidence="5">Methyltransferase: Displays a capping enzyme activity. This function is necessary since all viral RNAs are synthesized in the cytoplasm, and host capping enzymes are restricted to the nucleus. The enzymatic reaction involves a covalent link between 7-methyl-GMP and the methyltransferase, whereas eukaryotic capping enzymes form a covalent complex only with GMP. Methyltransferase catalyzes transfer of a methyl group from S-adenosylmethionine to GTP and GDP to yield m(7)GTP or m(7)GDP. GDP is a better substrate than GTP. This enzyme also displays guanylyltransferase activity to form a covalent complex, methyltransferase-m(7)GMP, from which 7-methyl-GMP is transferred to the mRNA to create the cap structure.</text>
</comment>
<comment type="function">
    <text evidence="5">Y-domain: Indispensable for virus replication.</text>
</comment>
<comment type="function">
    <text evidence="5">Putative protease: The putative protease domain although necessary for replication of the virus may not be a protease but rather a structural Zn(2+)-binding domain. Inhibits induction of IFN-beta by MDA5 and RIG-I pathways and down-regulates the expression of MDA5.</text>
</comment>
<comment type="function">
    <text evidence="2 5">NTPase/helicase: Multi-functional protein that exhibits NTPase and RNA unwinding activities (By similarity). Hydrolyzes all NTPs efficiently and unwinds RNA duplexes containing 5' overhangs (By similarity). Possesses a sequence independent RNA-5'-triphosphatase (RTPase) activity suggestive of its role in forming viral cap structure. Also participates in viral genome replication, RNA translocation and genome packaging/unpackaging (By similarity).</text>
</comment>
<comment type="function">
    <text evidence="5 6">RNA-directed RNA polymerase: Plays an essential role in the virus replication (By similarity). Binds to the 3'-end of the genomic RNA to initiate viral replication (By similarity).</text>
</comment>
<comment type="catalytic activity">
    <reaction evidence="9">
        <text>RNA(n) + a ribonucleoside 5'-triphosphate = RNA(n+1) + diphosphate</text>
        <dbReference type="Rhea" id="RHEA:21248"/>
        <dbReference type="Rhea" id="RHEA-COMP:14527"/>
        <dbReference type="Rhea" id="RHEA-COMP:17342"/>
        <dbReference type="ChEBI" id="CHEBI:33019"/>
        <dbReference type="ChEBI" id="CHEBI:61557"/>
        <dbReference type="ChEBI" id="CHEBI:140395"/>
        <dbReference type="EC" id="2.7.7.48"/>
    </reaction>
</comment>
<comment type="catalytic activity">
    <reaction evidence="5">
        <text>GTP + S-adenosyl-L-methionine = N(7)-methyl-GTP + S-adenosyl-L-homocysteine</text>
        <dbReference type="Rhea" id="RHEA:46948"/>
        <dbReference type="ChEBI" id="CHEBI:37565"/>
        <dbReference type="ChEBI" id="CHEBI:57856"/>
        <dbReference type="ChEBI" id="CHEBI:59789"/>
        <dbReference type="ChEBI" id="CHEBI:87133"/>
    </reaction>
    <physiologicalReaction direction="left-to-right" evidence="5">
        <dbReference type="Rhea" id="RHEA:46949"/>
    </physiologicalReaction>
</comment>
<comment type="cofactor">
    <cofactor evidence="5">
        <name>Mg(2+)</name>
        <dbReference type="ChEBI" id="CHEBI:18420"/>
    </cofactor>
    <text evidence="5">For methyltransferase activity.</text>
</comment>
<comment type="activity regulation">
    <text evidence="5">Putative protease: Inhibited by chymostatin.</text>
</comment>
<comment type="subunit">
    <text evidence="3">The protease domain interacts with host EIF2AK4 (via C-terminus); this interaction inhibits dimerization of EIF2AK4 and prevents EIF2AK4-mediated phosphorylation of host EIF2A.</text>
</comment>
<comment type="subcellular location">
    <subcellularLocation>
        <location evidence="5">Host cytoplasm</location>
    </subcellularLocation>
    <subcellularLocation>
        <location evidence="5">Host cytoplasm</location>
        <location evidence="5">Host perinuclear region</location>
    </subcellularLocation>
</comment>
<comment type="domain">
    <text evidence="3 5">Contains a methyltransferase domain, a Y-domain, a putative protease region, a zinc-binding region with similarity to calycins, a proline-rich disordered hypervariable region (HVR), a macro domain (also called X-domain), a helicase domain and an RNA-dependent RNA polymerase domain (By similarity). Since the boundaries and the activity of the putative protease are not clearly defined, the zinc-binding region might be part of the putative protease (By similarity).</text>
</comment>
<comment type="PTM">
    <text evidence="5">ORF1 polyprotein does not seem to be processed into distinct enzymatic domains by a viral protease belonging to ORF1, but could be processed by a host serine protease like thrombin.</text>
</comment>
<comment type="similarity">
    <text evidence="12">Belongs to the hepevirus non-structural polyprotein family.</text>
</comment>
<keyword id="KW-0067">ATP-binding</keyword>
<keyword id="KW-1015">Disulfide bond</keyword>
<keyword id="KW-0347">Helicase</keyword>
<keyword id="KW-1035">Host cytoplasm</keyword>
<keyword id="KW-0378">Hydrolase</keyword>
<keyword id="KW-0460">Magnesium</keyword>
<keyword id="KW-0479">Metal-binding</keyword>
<keyword id="KW-0489">Methyltransferase</keyword>
<keyword id="KW-0547">Nucleotide-binding</keyword>
<keyword id="KW-0548">Nucleotidyltransferase</keyword>
<keyword id="KW-0645">Protease</keyword>
<keyword id="KW-0694">RNA-binding</keyword>
<keyword id="KW-0696">RNA-directed RNA polymerase</keyword>
<keyword id="KW-0788">Thiol protease</keyword>
<keyword id="KW-0808">Transferase</keyword>
<keyword id="KW-0693">Viral RNA replication</keyword>
<keyword id="KW-0862">Zinc</keyword>
<gene>
    <name type="ORF">ORF1</name>
</gene>
<dbReference type="EC" id="2.1.1.-" evidence="4"/>
<dbReference type="EC" id="2.7.7.-" evidence="5"/>
<dbReference type="EC" id="3.4.-.-" evidence="5"/>
<dbReference type="EC" id="3.6.4.-" evidence="5"/>
<dbReference type="EC" id="2.7.7.48"/>
<dbReference type="EMBL" id="M74506">
    <property type="protein sequence ID" value="AAA45730.1"/>
    <property type="molecule type" value="Genomic_RNA"/>
</dbReference>
<dbReference type="PIR" id="A44212">
    <property type="entry name" value="A44212"/>
</dbReference>
<dbReference type="SMR" id="Q03495"/>
<dbReference type="Proteomes" id="UP000007245">
    <property type="component" value="Segment"/>
</dbReference>
<dbReference type="GO" id="GO:0044220">
    <property type="term" value="C:host cell perinuclear region of cytoplasm"/>
    <property type="evidence" value="ECO:0007669"/>
    <property type="project" value="UniProtKB-SubCell"/>
</dbReference>
<dbReference type="GO" id="GO:0005524">
    <property type="term" value="F:ATP binding"/>
    <property type="evidence" value="ECO:0007669"/>
    <property type="project" value="UniProtKB-KW"/>
</dbReference>
<dbReference type="GO" id="GO:0008234">
    <property type="term" value="F:cysteine-type peptidase activity"/>
    <property type="evidence" value="ECO:0007669"/>
    <property type="project" value="UniProtKB-KW"/>
</dbReference>
<dbReference type="GO" id="GO:0004386">
    <property type="term" value="F:helicase activity"/>
    <property type="evidence" value="ECO:0007669"/>
    <property type="project" value="UniProtKB-KW"/>
</dbReference>
<dbReference type="GO" id="GO:0046872">
    <property type="term" value="F:metal ion binding"/>
    <property type="evidence" value="ECO:0007669"/>
    <property type="project" value="UniProtKB-KW"/>
</dbReference>
<dbReference type="GO" id="GO:0008174">
    <property type="term" value="F:mRNA methyltransferase activity"/>
    <property type="evidence" value="ECO:0007669"/>
    <property type="project" value="InterPro"/>
</dbReference>
<dbReference type="GO" id="GO:0003723">
    <property type="term" value="F:RNA binding"/>
    <property type="evidence" value="ECO:0007669"/>
    <property type="project" value="UniProtKB-KW"/>
</dbReference>
<dbReference type="GO" id="GO:0003968">
    <property type="term" value="F:RNA-directed RNA polymerase activity"/>
    <property type="evidence" value="ECO:0007669"/>
    <property type="project" value="UniProtKB-KW"/>
</dbReference>
<dbReference type="GO" id="GO:0006351">
    <property type="term" value="P:DNA-templated transcription"/>
    <property type="evidence" value="ECO:0007669"/>
    <property type="project" value="InterPro"/>
</dbReference>
<dbReference type="GO" id="GO:0032259">
    <property type="term" value="P:methylation"/>
    <property type="evidence" value="ECO:0007669"/>
    <property type="project" value="UniProtKB-KW"/>
</dbReference>
<dbReference type="GO" id="GO:0016556">
    <property type="term" value="P:mRNA modification"/>
    <property type="evidence" value="ECO:0007669"/>
    <property type="project" value="InterPro"/>
</dbReference>
<dbReference type="GO" id="GO:0006508">
    <property type="term" value="P:proteolysis"/>
    <property type="evidence" value="ECO:0007669"/>
    <property type="project" value="UniProtKB-KW"/>
</dbReference>
<dbReference type="GO" id="GO:0006396">
    <property type="term" value="P:RNA processing"/>
    <property type="evidence" value="ECO:0007669"/>
    <property type="project" value="InterPro"/>
</dbReference>
<dbReference type="GO" id="GO:0019082">
    <property type="term" value="P:viral protein processing"/>
    <property type="evidence" value="ECO:0007669"/>
    <property type="project" value="InterPro"/>
</dbReference>
<dbReference type="GO" id="GO:0039694">
    <property type="term" value="P:viral RNA genome replication"/>
    <property type="evidence" value="ECO:0007669"/>
    <property type="project" value="InterPro"/>
</dbReference>
<dbReference type="CDD" id="cd23259">
    <property type="entry name" value="Hepeviridae_RdRp"/>
    <property type="match status" value="1"/>
</dbReference>
<dbReference type="CDD" id="cd21557">
    <property type="entry name" value="Macro_X_Nsp3-like"/>
    <property type="match status" value="1"/>
</dbReference>
<dbReference type="Gene3D" id="3.40.220.10">
    <property type="entry name" value="Leucine Aminopeptidase, subunit E, domain 1"/>
    <property type="match status" value="1"/>
</dbReference>
<dbReference type="Gene3D" id="3.40.50.300">
    <property type="entry name" value="P-loop containing nucleotide triphosphate hydrolases"/>
    <property type="match status" value="2"/>
</dbReference>
<dbReference type="InterPro" id="IPR027351">
    <property type="entry name" value="(+)RNA_virus_helicase_core_dom"/>
</dbReference>
<dbReference type="InterPro" id="IPR002588">
    <property type="entry name" value="Alphavirus-like_MT_dom"/>
</dbReference>
<dbReference type="InterPro" id="IPR043502">
    <property type="entry name" value="DNA/RNA_pol_sf"/>
</dbReference>
<dbReference type="InterPro" id="IPR008748">
    <property type="entry name" value="Hepatitis-E_Cys-pept"/>
</dbReference>
<dbReference type="InterPro" id="IPR022202">
    <property type="entry name" value="Hepatitis-E_hinge"/>
</dbReference>
<dbReference type="InterPro" id="IPR047307">
    <property type="entry name" value="Hepeviridae_RdRp"/>
</dbReference>
<dbReference type="InterPro" id="IPR002589">
    <property type="entry name" value="Macro_dom"/>
</dbReference>
<dbReference type="InterPro" id="IPR043472">
    <property type="entry name" value="Macro_dom-like"/>
</dbReference>
<dbReference type="InterPro" id="IPR044371">
    <property type="entry name" value="Macro_X_NSP3-like"/>
</dbReference>
<dbReference type="InterPro" id="IPR027417">
    <property type="entry name" value="P-loop_NTPase"/>
</dbReference>
<dbReference type="InterPro" id="IPR001788">
    <property type="entry name" value="RNA-dep_RNA_pol_alsuvir"/>
</dbReference>
<dbReference type="InterPro" id="IPR007094">
    <property type="entry name" value="RNA-dir_pol_PSvirus"/>
</dbReference>
<dbReference type="Pfam" id="PF12526">
    <property type="entry name" value="DUF3729"/>
    <property type="match status" value="1"/>
</dbReference>
<dbReference type="Pfam" id="PF01661">
    <property type="entry name" value="Macro"/>
    <property type="match status" value="1"/>
</dbReference>
<dbReference type="Pfam" id="PF05417">
    <property type="entry name" value="Peptidase_C41"/>
    <property type="match status" value="1"/>
</dbReference>
<dbReference type="Pfam" id="PF00978">
    <property type="entry name" value="RdRP_2"/>
    <property type="match status" value="1"/>
</dbReference>
<dbReference type="Pfam" id="PF01443">
    <property type="entry name" value="Viral_helicase1"/>
    <property type="match status" value="1"/>
</dbReference>
<dbReference type="Pfam" id="PF01660">
    <property type="entry name" value="Vmethyltransf"/>
    <property type="match status" value="1"/>
</dbReference>
<dbReference type="SMART" id="SM00506">
    <property type="entry name" value="A1pp"/>
    <property type="match status" value="1"/>
</dbReference>
<dbReference type="SUPFAM" id="SSF56672">
    <property type="entry name" value="DNA/RNA polymerases"/>
    <property type="match status" value="1"/>
</dbReference>
<dbReference type="SUPFAM" id="SSF52949">
    <property type="entry name" value="Macro domain-like"/>
    <property type="match status" value="1"/>
</dbReference>
<dbReference type="SUPFAM" id="SSF52540">
    <property type="entry name" value="P-loop containing nucleoside triphosphate hydrolases"/>
    <property type="match status" value="1"/>
</dbReference>
<dbReference type="PROSITE" id="PS51743">
    <property type="entry name" value="ALPHAVIRUS_MT"/>
    <property type="match status" value="1"/>
</dbReference>
<dbReference type="PROSITE" id="PS51154">
    <property type="entry name" value="MACRO"/>
    <property type="match status" value="1"/>
</dbReference>
<dbReference type="PROSITE" id="PS51657">
    <property type="entry name" value="PSRV_HELICASE"/>
    <property type="match status" value="1"/>
</dbReference>
<dbReference type="PROSITE" id="PS50507">
    <property type="entry name" value="RDRP_SSRNA_POS"/>
    <property type="match status" value="1"/>
</dbReference>
<evidence type="ECO:0000250" key="1"/>
<evidence type="ECO:0000250" key="2">
    <source>
        <dbReference type="UniProtKB" id="P29324"/>
    </source>
</evidence>
<evidence type="ECO:0000250" key="3">
    <source>
        <dbReference type="UniProtKB" id="P33424"/>
    </source>
</evidence>
<evidence type="ECO:0000250" key="4">
    <source>
        <dbReference type="UniProtKB" id="Q04610"/>
    </source>
</evidence>
<evidence type="ECO:0000250" key="5">
    <source>
        <dbReference type="UniProtKB" id="Q81862"/>
    </source>
</evidence>
<evidence type="ECO:0000250" key="6">
    <source>
        <dbReference type="UniProtKB" id="Q9WC28"/>
    </source>
</evidence>
<evidence type="ECO:0000255" key="7"/>
<evidence type="ECO:0000255" key="8">
    <source>
        <dbReference type="PROSITE-ProRule" id="PRU00490"/>
    </source>
</evidence>
<evidence type="ECO:0000255" key="9">
    <source>
        <dbReference type="PROSITE-ProRule" id="PRU00539"/>
    </source>
</evidence>
<evidence type="ECO:0000255" key="10">
    <source>
        <dbReference type="PROSITE-ProRule" id="PRU01079"/>
    </source>
</evidence>
<evidence type="ECO:0000256" key="11">
    <source>
        <dbReference type="SAM" id="MobiDB-lite"/>
    </source>
</evidence>
<evidence type="ECO:0000305" key="12"/>
<reference key="1">
    <citation type="journal article" date="1992" name="Virology">
        <title>Molecular cloning and sequencing of the Mexico isolate of hepatitis E virus (HEV).</title>
        <authorList>
            <person name="Huang C.C."/>
            <person name="Nguyen D."/>
            <person name="Fernandez J."/>
            <person name="Yun K.Y."/>
            <person name="Fry K.E."/>
            <person name="Bradley D.W."/>
            <person name="Tam A.W."/>
            <person name="Reyes G.R."/>
        </authorList>
    </citation>
    <scope>NUCLEOTIDE SEQUENCE [GENOMIC RNA]</scope>
</reference>
<reference key="2">
    <citation type="journal article" date="1992" name="Virus Genes">
        <title>Hepatitis E virus (HEV): strain variation in the nonstructural gene region encoding consensus motifs for an RNA-dependent RNA polymerase and an ATP/GTP binding site.</title>
        <authorList>
            <person name="Fry K.E."/>
            <person name="Tam A.W."/>
            <person name="Smith M.M."/>
            <person name="Kim J.P."/>
            <person name="Luk K.-C."/>
            <person name="Young L.M."/>
            <person name="Piatak M."/>
            <person name="Feldman R.A."/>
            <person name="Yun K.Y."/>
            <person name="Purdy M.A."/>
            <person name="McCaustland K.A."/>
            <person name="Bradley D.W."/>
            <person name="Reyes G.R."/>
        </authorList>
    </citation>
    <scope>NUCLEOTIDE SEQUENCE [GENOMIC RNA] OF 965-1691</scope>
</reference>
<organismHost>
    <name type="scientific">Bandicota bengalensis</name>
    <name type="common">lesser bandicoot rat</name>
    <dbReference type="NCBI Taxonomy" id="69079"/>
</organismHost>
<organismHost>
    <name type="scientific">Callithrix</name>
    <dbReference type="NCBI Taxonomy" id="9481"/>
</organismHost>
<organismHost>
    <name type="scientific">Cercopithecus hamlyni</name>
    <name type="common">Owl-faced monkey</name>
    <name type="synonym">Hamlyn's monkey</name>
    <dbReference type="NCBI Taxonomy" id="9536"/>
</organismHost>
<organismHost>
    <name type="scientific">Chlorocebus aethiops</name>
    <name type="common">Green monkey</name>
    <name type="synonym">Cercopithecus aethiops</name>
    <dbReference type="NCBI Taxonomy" id="9534"/>
</organismHost>
<organismHost>
    <name type="scientific">Gallus gallus</name>
    <name type="common">Chicken</name>
    <dbReference type="NCBI Taxonomy" id="9031"/>
</organismHost>
<organismHost>
    <name type="scientific">Homo sapiens</name>
    <name type="common">Human</name>
    <dbReference type="NCBI Taxonomy" id="9606"/>
</organismHost>
<organismHost>
    <name type="scientific">Macaca</name>
    <name type="common">macaques</name>
    <dbReference type="NCBI Taxonomy" id="9539"/>
</organismHost>
<organismHost>
    <name type="scientific">Mus musculus</name>
    <name type="common">Mouse</name>
    <dbReference type="NCBI Taxonomy" id="10090"/>
</organismHost>
<organismHost>
    <name type="scientific">Pan troglodytes</name>
    <name type="common">Chimpanzee</name>
    <dbReference type="NCBI Taxonomy" id="9598"/>
</organismHost>
<organismHost>
    <name type="scientific">Saimiri</name>
    <name type="common">squirrel monkeys</name>
    <dbReference type="NCBI Taxonomy" id="9520"/>
</organismHost>
<organismHost>
    <name type="scientific">Sus scrofa</name>
    <name type="common">Pig</name>
    <dbReference type="NCBI Taxonomy" id="9823"/>
</organismHost>
<organism>
    <name type="scientific">Hepatitis E virus genotype 2 (isolate Human/Mexico)</name>
    <name type="common">HEV-2</name>
    <dbReference type="NCBI Taxonomy" id="31768"/>
    <lineage>
        <taxon>Viruses</taxon>
        <taxon>Riboviria</taxon>
        <taxon>Orthornavirae</taxon>
        <taxon>Kitrinoviricota</taxon>
        <taxon>Alsuviricetes</taxon>
        <taxon>Hepelivirales</taxon>
        <taxon>Hepeviridae</taxon>
        <taxon>Orthohepevirinae</taxon>
        <taxon>Paslahepevirus</taxon>
        <taxon>Hepatitis E virus</taxon>
    </lineage>
</organism>
<feature type="chain" id="PRO_0000100133" description="Non-structural polyprotein pORF1">
    <location>
        <begin position="1"/>
        <end position="1691"/>
    </location>
</feature>
<feature type="domain" description="Alphavirus-like MT" evidence="10">
    <location>
        <begin position="56"/>
        <end position="240"/>
    </location>
</feature>
<feature type="domain" description="Macro" evidence="8">
    <location>
        <begin position="773"/>
        <end position="919"/>
    </location>
</feature>
<feature type="domain" description="(+)RNA virus helicase ATP-binding">
    <location>
        <begin position="932"/>
        <end position="1080"/>
    </location>
</feature>
<feature type="domain" description="(+)RNA virus helicase C-terminal">
    <location>
        <begin position="1081"/>
        <end position="1214"/>
    </location>
</feature>
<feature type="domain" description="RdRp catalytic" evidence="9">
    <location>
        <begin position="1452"/>
        <end position="1563"/>
    </location>
</feature>
<feature type="region of interest" description="Methyltransferase" evidence="1">
    <location>
        <begin position="60"/>
        <end position="240"/>
    </location>
</feature>
<feature type="region of interest" description="Y-domain" evidence="5">
    <location>
        <begin position="241"/>
        <end position="439"/>
    </location>
</feature>
<feature type="region of interest" description="Putative protease" evidence="3">
    <location>
        <begin position="442"/>
        <end position="509"/>
    </location>
</feature>
<feature type="region of interest" description="Zinc-binding" evidence="3">
    <location>
        <begin position="510"/>
        <end position="691"/>
    </location>
</feature>
<feature type="region of interest" description="Hinge" evidence="1">
    <location>
        <begin position="710"/>
        <end position="776"/>
    </location>
</feature>
<feature type="region of interest" description="Disordered" evidence="11">
    <location>
        <begin position="722"/>
        <end position="778"/>
    </location>
</feature>
<feature type="region of interest" description="X-domain" evidence="1">
    <location>
        <begin position="783"/>
        <end position="940"/>
    </location>
</feature>
<feature type="region of interest" description="NTPase/helicase" evidence="1">
    <location>
        <begin position="958"/>
        <end position="1202"/>
    </location>
</feature>
<feature type="region of interest" description="RNA-directed RNA polymerase" evidence="1">
    <location>
        <begin position="1205"/>
        <end position="1691"/>
    </location>
</feature>
<feature type="binding site" evidence="3">
    <location>
        <position position="671"/>
    </location>
    <ligand>
        <name>Zn(2+)</name>
        <dbReference type="ChEBI" id="CHEBI:29105"/>
    </ligand>
</feature>
<feature type="binding site" evidence="3">
    <location>
        <position position="673"/>
    </location>
    <ligand>
        <name>Zn(2+)</name>
        <dbReference type="ChEBI" id="CHEBI:29105"/>
    </ligand>
</feature>
<feature type="binding site" evidence="3">
    <location>
        <position position="686"/>
    </location>
    <ligand>
        <name>Zn(2+)</name>
        <dbReference type="ChEBI" id="CHEBI:29105"/>
    </ligand>
</feature>
<feature type="binding site" evidence="7">
    <location>
        <begin position="973"/>
        <end position="980"/>
    </location>
    <ligand>
        <name>ATP</name>
        <dbReference type="ChEBI" id="CHEBI:30616"/>
    </ligand>
</feature>
<feature type="disulfide bond" evidence="5">
    <location>
        <begin position="434"/>
        <end position="481"/>
    </location>
</feature>
<proteinExistence type="inferred from homology"/>
<name>POLN_HEVME</name>